<comment type="miscellaneous">
    <text>An IgG (called leucokinin) binds reversibly to the cell membrane of neutrophils in the blood. Leucokininase on the membrane releases the active peptide tuftsin from the gamma chain. Tuftsin is essential for maximum stimulation of the phagocytic activity of neutrophils.</text>
</comment>
<keyword id="KW-0903">Direct protein sequencing</keyword>
<feature type="peptide" id="PRO_0000044228" description="Phagocytosis-stimulating peptide">
    <location>
        <begin position="1"/>
        <end position="4"/>
    </location>
</feature>
<proteinExistence type="evidence at protein level"/>
<name>TUFT_HUMAN</name>
<protein>
    <recommendedName>
        <fullName>Phagocytosis-stimulating peptide</fullName>
    </recommendedName>
    <alternativeName>
        <fullName>Tuftsin</fullName>
    </alternativeName>
</protein>
<dbReference type="PIR" id="A02147">
    <property type="entry name" value="A02147"/>
</dbReference>
<dbReference type="Pharos" id="P01858">
    <property type="development level" value="Tdark"/>
</dbReference>
<sequence length="4" mass="501">TKPR</sequence>
<accession>P01858</accession>
<reference key="1">
    <citation type="journal article" date="1972" name="Biochem. Biophys. Res. Commun.">
        <title>The characteristics, isolation and synthesis of the phagocytosis stimulating peptide tuftsin.</title>
        <authorList>
            <person name="Nishioka K."/>
            <person name="Constantopoulos A."/>
            <person name="Satoh P.S."/>
            <person name="Najjar V.A."/>
        </authorList>
    </citation>
    <scope>PROTEIN SEQUENCE</scope>
</reference>
<reference key="2">
    <citation type="journal article" date="1967" name="Biochemistry">
        <title>The physiological role of the lymphoid system. VI. The stimulatory effect of leucophilic gamma globulin (leucokinin) on the phagocytic activity of human polymorphonuclear leucocyte.</title>
        <authorList>
            <person name="Fidalgo B.V."/>
            <person name="Najjar V.A."/>
        </authorList>
    </citation>
    <scope>IMMUNOGLOBULIN CLASS</scope>
</reference>
<organism>
    <name type="scientific">Homo sapiens</name>
    <name type="common">Human</name>
    <dbReference type="NCBI Taxonomy" id="9606"/>
    <lineage>
        <taxon>Eukaryota</taxon>
        <taxon>Metazoa</taxon>
        <taxon>Chordata</taxon>
        <taxon>Craniata</taxon>
        <taxon>Vertebrata</taxon>
        <taxon>Euteleostomi</taxon>
        <taxon>Mammalia</taxon>
        <taxon>Eutheria</taxon>
        <taxon>Euarchontoglires</taxon>
        <taxon>Primates</taxon>
        <taxon>Haplorrhini</taxon>
        <taxon>Catarrhini</taxon>
        <taxon>Hominidae</taxon>
        <taxon>Homo</taxon>
    </lineage>
</organism>